<accession>Q8G863</accession>
<protein>
    <recommendedName>
        <fullName evidence="1">Aspartate--tRNA(Asp/Asn) ligase</fullName>
        <ecNumber evidence="1">6.1.1.23</ecNumber>
    </recommendedName>
    <alternativeName>
        <fullName evidence="1">Aspartyl-tRNA synthetase</fullName>
        <shortName evidence="1">AspRS</shortName>
    </alternativeName>
    <alternativeName>
        <fullName evidence="1">Non-discriminating aspartyl-tRNA synthetase</fullName>
        <shortName evidence="1">ND-AspRS</shortName>
    </alternativeName>
</protein>
<evidence type="ECO:0000255" key="1">
    <source>
        <dbReference type="HAMAP-Rule" id="MF_00044"/>
    </source>
</evidence>
<evidence type="ECO:0000256" key="2">
    <source>
        <dbReference type="SAM" id="MobiDB-lite"/>
    </source>
</evidence>
<organism>
    <name type="scientific">Bifidobacterium longum (strain NCC 2705)</name>
    <dbReference type="NCBI Taxonomy" id="206672"/>
    <lineage>
        <taxon>Bacteria</taxon>
        <taxon>Bacillati</taxon>
        <taxon>Actinomycetota</taxon>
        <taxon>Actinomycetes</taxon>
        <taxon>Bifidobacteriales</taxon>
        <taxon>Bifidobacteriaceae</taxon>
        <taxon>Bifidobacterium</taxon>
    </lineage>
</organism>
<dbReference type="EC" id="6.1.1.23" evidence="1"/>
<dbReference type="EMBL" id="AE014295">
    <property type="protein sequence ID" value="AAN23885.1"/>
    <property type="molecule type" value="Genomic_DNA"/>
</dbReference>
<dbReference type="RefSeq" id="NP_695249.1">
    <property type="nucleotide sequence ID" value="NC_004307.2"/>
</dbReference>
<dbReference type="RefSeq" id="WP_011067913.1">
    <property type="nucleotide sequence ID" value="NC_004307.2"/>
</dbReference>
<dbReference type="SMR" id="Q8G863"/>
<dbReference type="STRING" id="206672.BL0018"/>
<dbReference type="EnsemblBacteria" id="AAN23885">
    <property type="protein sequence ID" value="AAN23885"/>
    <property type="gene ID" value="BL0018"/>
</dbReference>
<dbReference type="KEGG" id="blo:BL0018"/>
<dbReference type="PATRIC" id="fig|206672.9.peg.19"/>
<dbReference type="HOGENOM" id="CLU_014330_3_2_11"/>
<dbReference type="OrthoDB" id="9802326at2"/>
<dbReference type="PhylomeDB" id="Q8G863"/>
<dbReference type="Proteomes" id="UP000000439">
    <property type="component" value="Chromosome"/>
</dbReference>
<dbReference type="GO" id="GO:0005737">
    <property type="term" value="C:cytoplasm"/>
    <property type="evidence" value="ECO:0007669"/>
    <property type="project" value="UniProtKB-SubCell"/>
</dbReference>
<dbReference type="GO" id="GO:0004815">
    <property type="term" value="F:aspartate-tRNA ligase activity"/>
    <property type="evidence" value="ECO:0007669"/>
    <property type="project" value="UniProtKB-UniRule"/>
</dbReference>
<dbReference type="GO" id="GO:0050560">
    <property type="term" value="F:aspartate-tRNA(Asn) ligase activity"/>
    <property type="evidence" value="ECO:0007669"/>
    <property type="project" value="UniProtKB-EC"/>
</dbReference>
<dbReference type="GO" id="GO:0005524">
    <property type="term" value="F:ATP binding"/>
    <property type="evidence" value="ECO:0007669"/>
    <property type="project" value="UniProtKB-UniRule"/>
</dbReference>
<dbReference type="GO" id="GO:0003676">
    <property type="term" value="F:nucleic acid binding"/>
    <property type="evidence" value="ECO:0007669"/>
    <property type="project" value="InterPro"/>
</dbReference>
<dbReference type="GO" id="GO:0006422">
    <property type="term" value="P:aspartyl-tRNA aminoacylation"/>
    <property type="evidence" value="ECO:0007669"/>
    <property type="project" value="UniProtKB-UniRule"/>
</dbReference>
<dbReference type="CDD" id="cd00777">
    <property type="entry name" value="AspRS_core"/>
    <property type="match status" value="1"/>
</dbReference>
<dbReference type="CDD" id="cd04317">
    <property type="entry name" value="EcAspRS_like_N"/>
    <property type="match status" value="1"/>
</dbReference>
<dbReference type="Gene3D" id="3.30.930.10">
    <property type="entry name" value="Bira Bifunctional Protein, Domain 2"/>
    <property type="match status" value="1"/>
</dbReference>
<dbReference type="Gene3D" id="3.30.1360.30">
    <property type="entry name" value="GAD-like domain"/>
    <property type="match status" value="1"/>
</dbReference>
<dbReference type="Gene3D" id="2.40.50.140">
    <property type="entry name" value="Nucleic acid-binding proteins"/>
    <property type="match status" value="1"/>
</dbReference>
<dbReference type="HAMAP" id="MF_00044">
    <property type="entry name" value="Asp_tRNA_synth_type1"/>
    <property type="match status" value="1"/>
</dbReference>
<dbReference type="InterPro" id="IPR004364">
    <property type="entry name" value="Aa-tRNA-synt_II"/>
</dbReference>
<dbReference type="InterPro" id="IPR006195">
    <property type="entry name" value="aa-tRNA-synth_II"/>
</dbReference>
<dbReference type="InterPro" id="IPR045864">
    <property type="entry name" value="aa-tRNA-synth_II/BPL/LPL"/>
</dbReference>
<dbReference type="InterPro" id="IPR004524">
    <property type="entry name" value="Asp-tRNA-ligase_1"/>
</dbReference>
<dbReference type="InterPro" id="IPR047089">
    <property type="entry name" value="Asp-tRNA-ligase_1_N"/>
</dbReference>
<dbReference type="InterPro" id="IPR002312">
    <property type="entry name" value="Asp/Asn-tRNA-synth_IIb"/>
</dbReference>
<dbReference type="InterPro" id="IPR047090">
    <property type="entry name" value="AspRS_core"/>
</dbReference>
<dbReference type="InterPro" id="IPR004115">
    <property type="entry name" value="GAD-like_sf"/>
</dbReference>
<dbReference type="InterPro" id="IPR029351">
    <property type="entry name" value="GAD_dom"/>
</dbReference>
<dbReference type="InterPro" id="IPR012340">
    <property type="entry name" value="NA-bd_OB-fold"/>
</dbReference>
<dbReference type="InterPro" id="IPR004365">
    <property type="entry name" value="NA-bd_OB_tRNA"/>
</dbReference>
<dbReference type="NCBIfam" id="TIGR00459">
    <property type="entry name" value="aspS_bact"/>
    <property type="match status" value="1"/>
</dbReference>
<dbReference type="NCBIfam" id="NF001750">
    <property type="entry name" value="PRK00476.1"/>
    <property type="match status" value="1"/>
</dbReference>
<dbReference type="PANTHER" id="PTHR22594:SF5">
    <property type="entry name" value="ASPARTATE--TRNA LIGASE, MITOCHONDRIAL"/>
    <property type="match status" value="1"/>
</dbReference>
<dbReference type="PANTHER" id="PTHR22594">
    <property type="entry name" value="ASPARTYL/LYSYL-TRNA SYNTHETASE"/>
    <property type="match status" value="1"/>
</dbReference>
<dbReference type="Pfam" id="PF02938">
    <property type="entry name" value="GAD"/>
    <property type="match status" value="1"/>
</dbReference>
<dbReference type="Pfam" id="PF00152">
    <property type="entry name" value="tRNA-synt_2"/>
    <property type="match status" value="1"/>
</dbReference>
<dbReference type="Pfam" id="PF01336">
    <property type="entry name" value="tRNA_anti-codon"/>
    <property type="match status" value="1"/>
</dbReference>
<dbReference type="PRINTS" id="PR01042">
    <property type="entry name" value="TRNASYNTHASP"/>
</dbReference>
<dbReference type="SUPFAM" id="SSF55681">
    <property type="entry name" value="Class II aaRS and biotin synthetases"/>
    <property type="match status" value="1"/>
</dbReference>
<dbReference type="SUPFAM" id="SSF55261">
    <property type="entry name" value="GAD domain-like"/>
    <property type="match status" value="1"/>
</dbReference>
<dbReference type="SUPFAM" id="SSF50249">
    <property type="entry name" value="Nucleic acid-binding proteins"/>
    <property type="match status" value="1"/>
</dbReference>
<dbReference type="PROSITE" id="PS50862">
    <property type="entry name" value="AA_TRNA_LIGASE_II"/>
    <property type="match status" value="1"/>
</dbReference>
<comment type="function">
    <text evidence="1">Aspartyl-tRNA synthetase with relaxed tRNA specificity since it is able to aspartylate not only its cognate tRNA(Asp) but also tRNA(Asn). Reaction proceeds in two steps: L-aspartate is first activated by ATP to form Asp-AMP and then transferred to the acceptor end of tRNA(Asp/Asn).</text>
</comment>
<comment type="catalytic activity">
    <reaction evidence="1">
        <text>tRNA(Asx) + L-aspartate + ATP = L-aspartyl-tRNA(Asx) + AMP + diphosphate</text>
        <dbReference type="Rhea" id="RHEA:18349"/>
        <dbReference type="Rhea" id="RHEA-COMP:9710"/>
        <dbReference type="Rhea" id="RHEA-COMP:9711"/>
        <dbReference type="ChEBI" id="CHEBI:29991"/>
        <dbReference type="ChEBI" id="CHEBI:30616"/>
        <dbReference type="ChEBI" id="CHEBI:33019"/>
        <dbReference type="ChEBI" id="CHEBI:78442"/>
        <dbReference type="ChEBI" id="CHEBI:78516"/>
        <dbReference type="ChEBI" id="CHEBI:456215"/>
        <dbReference type="EC" id="6.1.1.23"/>
    </reaction>
</comment>
<comment type="subunit">
    <text evidence="1">Homodimer.</text>
</comment>
<comment type="subcellular location">
    <subcellularLocation>
        <location evidence="1">Cytoplasm</location>
    </subcellularLocation>
</comment>
<comment type="similarity">
    <text evidence="1">Belongs to the class-II aminoacyl-tRNA synthetase family. Type 1 subfamily.</text>
</comment>
<keyword id="KW-0030">Aminoacyl-tRNA synthetase</keyword>
<keyword id="KW-0067">ATP-binding</keyword>
<keyword id="KW-0963">Cytoplasm</keyword>
<keyword id="KW-0436">Ligase</keyword>
<keyword id="KW-0547">Nucleotide-binding</keyword>
<keyword id="KW-0648">Protein biosynthesis</keyword>
<keyword id="KW-1185">Reference proteome</keyword>
<name>SYDND_BIFLO</name>
<reference key="1">
    <citation type="journal article" date="2002" name="Proc. Natl. Acad. Sci. U.S.A.">
        <title>The genome sequence of Bifidobacterium longum reflects its adaptation to the human gastrointestinal tract.</title>
        <authorList>
            <person name="Schell M.A."/>
            <person name="Karmirantzou M."/>
            <person name="Snel B."/>
            <person name="Vilanova D."/>
            <person name="Berger B."/>
            <person name="Pessi G."/>
            <person name="Zwahlen M.-C."/>
            <person name="Desiere F."/>
            <person name="Bork P."/>
            <person name="Delley M."/>
            <person name="Pridmore R.D."/>
            <person name="Arigoni F."/>
        </authorList>
    </citation>
    <scope>NUCLEOTIDE SEQUENCE [LARGE SCALE GENOMIC DNA]</scope>
    <source>
        <strain>NCC 2705</strain>
    </source>
</reference>
<gene>
    <name evidence="1" type="primary">aspS</name>
    <name type="ordered locus">BL0018</name>
</gene>
<proteinExistence type="inferred from homology"/>
<feature type="chain" id="PRO_0000110834" description="Aspartate--tRNA(Asp/Asn) ligase">
    <location>
        <begin position="1"/>
        <end position="599"/>
    </location>
</feature>
<feature type="region of interest" description="Aspartate" evidence="1">
    <location>
        <begin position="204"/>
        <end position="207"/>
    </location>
</feature>
<feature type="region of interest" description="Disordered" evidence="2">
    <location>
        <begin position="565"/>
        <end position="599"/>
    </location>
</feature>
<feature type="compositionally biased region" description="Acidic residues" evidence="2">
    <location>
        <begin position="590"/>
        <end position="599"/>
    </location>
</feature>
<feature type="binding site" evidence="1">
    <location>
        <position position="180"/>
    </location>
    <ligand>
        <name>L-aspartate</name>
        <dbReference type="ChEBI" id="CHEBI:29991"/>
    </ligand>
</feature>
<feature type="binding site" evidence="1">
    <location>
        <begin position="226"/>
        <end position="228"/>
    </location>
    <ligand>
        <name>ATP</name>
        <dbReference type="ChEBI" id="CHEBI:30616"/>
    </ligand>
</feature>
<feature type="binding site" evidence="1">
    <location>
        <position position="226"/>
    </location>
    <ligand>
        <name>L-aspartate</name>
        <dbReference type="ChEBI" id="CHEBI:29991"/>
    </ligand>
</feature>
<feature type="binding site" evidence="1">
    <location>
        <position position="235"/>
    </location>
    <ligand>
        <name>ATP</name>
        <dbReference type="ChEBI" id="CHEBI:30616"/>
    </ligand>
</feature>
<feature type="binding site" evidence="1">
    <location>
        <position position="457"/>
    </location>
    <ligand>
        <name>L-aspartate</name>
        <dbReference type="ChEBI" id="CHEBI:29991"/>
    </ligand>
</feature>
<feature type="binding site" evidence="1">
    <location>
        <position position="491"/>
    </location>
    <ligand>
        <name>ATP</name>
        <dbReference type="ChEBI" id="CHEBI:30616"/>
    </ligand>
</feature>
<feature type="binding site" evidence="1">
    <location>
        <position position="498"/>
    </location>
    <ligand>
        <name>L-aspartate</name>
        <dbReference type="ChEBI" id="CHEBI:29991"/>
    </ligand>
</feature>
<feature type="binding site" evidence="1">
    <location>
        <begin position="543"/>
        <end position="546"/>
    </location>
    <ligand>
        <name>ATP</name>
        <dbReference type="ChEBI" id="CHEBI:30616"/>
    </ligand>
</feature>
<feature type="site" description="Important for tRNA non-discrimination" evidence="1">
    <location>
        <position position="35"/>
    </location>
</feature>
<feature type="site" description="Important for tRNA non-discrimination" evidence="1">
    <location>
        <position position="81"/>
    </location>
</feature>
<sequence length="599" mass="66936">MSQTAYRTHHATEVTEALVGQKVTLAGWVDRRRDHGGVAFIDLRDSTGLVQVVIYDEDMARPLRSEFVIQITGEVRLRPDGNENTHLATGKIEVVAETIEILAKSDALPFQVSTALENESENKLPGEDVRLKYRYLDLRRPSMQYNLKLRSDMAKAARHALEDMDFTEVETPTFIKSTPEGARDFVVPARLVPGSWYALPQSPQLLKQLLMVSGVERYYQLARCYRDEDFRADRQPEFTQLDMEMAYVDQEDVMAMTEKVIAAIWKSAGYEVQLPLPRITWKDAMDKYGSDKPDLRFGNPLVELTEYFKNTPFRVFQAPYVGAVVFKGGAATPRRQFDAWQDWARQRGAKGLAYVVFGENGELKGPVAKNLSDEERNGLREAVGAEEGDAVFFAAGSRESAQLLLGAVRVELASREGLLDPKKFAFTWVVDFPLFKPTDDPDDDDVAVGHSKWTSMHHPFTMPSKDWIDKFDKDPEHAMSDSYDIVCNGEEMGGGSVRIHRDDIQARVLDVLGITKEEADEKFGFLLEAFKYGAPPHAGLALGWDRTVSILAGADSIRDVIAFPKAGGGRDPLTGAPAPISDEQRAETGVDYDPDADEN</sequence>